<protein>
    <recommendedName>
        <fullName>Coiled-coil domain-containing protein 160</fullName>
    </recommendedName>
</protein>
<sequence length="323" mass="37695">MDARRKHWKENKFAPLFSAQDIPNEAAQLESSSEQMPLDKVKRMEIIFNLSSRKFREENKFKRKEFISQPNENEQESNLIERKINISKTEADTNSVSCESSNLDIATEESFNSTEELPTWVIKELSTPPQKDKKKKFTEGMSSKLRLNLLNEELEVLDMKCKKIEEEFESAEKELLNSKKEVSTKPLNFQEAEVETSKTDWELQALRNDLSEKATNVKNLTEELQQAKEVIHKLSLENKDLKETVRKLKRQTEVGNAFLKEEMKLYYELEMEKIRGELTAIKNELRTEKSLQARNNRALELLRKHFASVMPSGTSDNFMGDFF</sequence>
<name>CC160_BOVIN</name>
<feature type="chain" id="PRO_0000345950" description="Coiled-coil domain-containing protein 160">
    <location>
        <begin position="1"/>
        <end position="323"/>
    </location>
</feature>
<feature type="coiled-coil region" evidence="1">
    <location>
        <begin position="143"/>
        <end position="290"/>
    </location>
</feature>
<reference key="1">
    <citation type="submission" date="2005-12" db="EMBL/GenBank/DDBJ databases">
        <authorList>
            <consortium name="NIH - Mammalian Gene Collection (MGC) project"/>
        </authorList>
    </citation>
    <scope>NUCLEOTIDE SEQUENCE [LARGE SCALE MRNA]</scope>
    <source>
        <strain>Crossbred X Angus</strain>
        <tissue>Liver</tissue>
    </source>
</reference>
<comment type="similarity">
    <text evidence="2">Belongs to the CCDC160 family.</text>
</comment>
<organism>
    <name type="scientific">Bos taurus</name>
    <name type="common">Bovine</name>
    <dbReference type="NCBI Taxonomy" id="9913"/>
    <lineage>
        <taxon>Eukaryota</taxon>
        <taxon>Metazoa</taxon>
        <taxon>Chordata</taxon>
        <taxon>Craniata</taxon>
        <taxon>Vertebrata</taxon>
        <taxon>Euteleostomi</taxon>
        <taxon>Mammalia</taxon>
        <taxon>Eutheria</taxon>
        <taxon>Laurasiatheria</taxon>
        <taxon>Artiodactyla</taxon>
        <taxon>Ruminantia</taxon>
        <taxon>Pecora</taxon>
        <taxon>Bovidae</taxon>
        <taxon>Bovinae</taxon>
        <taxon>Bos</taxon>
    </lineage>
</organism>
<evidence type="ECO:0000255" key="1"/>
<evidence type="ECO:0000305" key="2"/>
<keyword id="KW-0175">Coiled coil</keyword>
<keyword id="KW-1185">Reference proteome</keyword>
<proteinExistence type="evidence at transcript level"/>
<accession>Q2T9U9</accession>
<dbReference type="EMBL" id="BC111258">
    <property type="protein sequence ID" value="AAI11259.2"/>
    <property type="molecule type" value="mRNA"/>
</dbReference>
<dbReference type="RefSeq" id="NP_001181989.1">
    <property type="nucleotide sequence ID" value="NM_001195060.1"/>
</dbReference>
<dbReference type="SMR" id="Q2T9U9"/>
<dbReference type="FunCoup" id="Q2T9U9">
    <property type="interactions" value="168"/>
</dbReference>
<dbReference type="STRING" id="9913.ENSBTAP00000047500"/>
<dbReference type="PaxDb" id="9913-ENSBTAP00000047500"/>
<dbReference type="Ensembl" id="ENSBTAT00000050851.4">
    <property type="protein sequence ID" value="ENSBTAP00000047500.2"/>
    <property type="gene ID" value="ENSBTAG00000036349.4"/>
</dbReference>
<dbReference type="Ensembl" id="ENSBTAT00000106551.1">
    <property type="protein sequence ID" value="ENSBTAP00000088573.1"/>
    <property type="gene ID" value="ENSBTAG00000036349.4"/>
</dbReference>
<dbReference type="Ensembl" id="ENSBTAT00000116780.1">
    <property type="protein sequence ID" value="ENSBTAP00000075128.1"/>
    <property type="gene ID" value="ENSBTAG00000036349.4"/>
</dbReference>
<dbReference type="Ensembl" id="ENSBTAT00000121657.1">
    <property type="protein sequence ID" value="ENSBTAP00000080590.1"/>
    <property type="gene ID" value="ENSBTAG00000036349.4"/>
</dbReference>
<dbReference type="Ensembl" id="ENSBTAT00000130621.1">
    <property type="protein sequence ID" value="ENSBTAP00000087993.1"/>
    <property type="gene ID" value="ENSBTAG00000036349.4"/>
</dbReference>
<dbReference type="GeneID" id="767883"/>
<dbReference type="KEGG" id="bta:767883"/>
<dbReference type="CTD" id="347475"/>
<dbReference type="VEuPathDB" id="HostDB:ENSBTAG00000036349"/>
<dbReference type="VGNC" id="VGNC:26864">
    <property type="gene designation" value="CCDC160"/>
</dbReference>
<dbReference type="eggNOG" id="ENOG502RVAM">
    <property type="taxonomic scope" value="Eukaryota"/>
</dbReference>
<dbReference type="GeneTree" id="ENSGT00390000013938"/>
<dbReference type="HOGENOM" id="CLU_058746_0_0_1"/>
<dbReference type="InParanoid" id="Q2T9U9"/>
<dbReference type="OMA" id="STWTTKE"/>
<dbReference type="TreeFam" id="TF351883"/>
<dbReference type="Proteomes" id="UP000009136">
    <property type="component" value="Chromosome X"/>
</dbReference>
<dbReference type="Bgee" id="ENSBTAG00000036349">
    <property type="expression patterns" value="Expressed in saliva-secreting gland and 82 other cell types or tissues"/>
</dbReference>
<dbReference type="PANTHER" id="PTHR48251">
    <property type="entry name" value="COILED-COIL DOMAIN-CONTAINING PROTEIN 160"/>
    <property type="match status" value="1"/>
</dbReference>
<dbReference type="PANTHER" id="PTHR48251:SF1">
    <property type="entry name" value="COILED-COIL DOMAIN-CONTAINING PROTEIN 160"/>
    <property type="match status" value="1"/>
</dbReference>
<gene>
    <name type="primary">CCDC160</name>
</gene>